<reference key="1">
    <citation type="journal article" date="2001" name="Microbiology">
        <title>The methylcitric acid pathway in Ralstonia eutropha: new genes identified involved in propionate metabolism.</title>
        <authorList>
            <person name="Bramer C.O."/>
            <person name="Steinbuchel A."/>
        </authorList>
    </citation>
    <scope>NUCLEOTIDE SEQUENCE [GENOMIC DNA]</scope>
    <scope>FUNCTION</scope>
    <scope>DISRUPTION PHENOTYPE</scope>
    <source>
        <strain>HF39</strain>
    </source>
</reference>
<comment type="function">
    <text evidence="1 2">Involved in the catabolism of short chain fatty acids (SCFA) via the tricarboxylic acid (TCA)(acetyl degradation route) and via the 2-methylcitrate cycle I (propionate degradation route). Catalyzes the dehydration of 2-methylcitrate (2-MC) to yield the cis isomer of 2-methyl-aconitate (PubMed:11495997). Could also catalyze the dehydration of citrate and the hydration of cis-aconitate (By similarity).</text>
</comment>
<comment type="catalytic activity">
    <reaction evidence="1">
        <text>(2S,3S)-2-methylcitrate = 2-methyl-cis-aconitate + H2O</text>
        <dbReference type="Rhea" id="RHEA:17725"/>
        <dbReference type="ChEBI" id="CHEBI:15377"/>
        <dbReference type="ChEBI" id="CHEBI:57872"/>
        <dbReference type="ChEBI" id="CHEBI:58853"/>
        <dbReference type="EC" id="4.2.1.79"/>
    </reaction>
</comment>
<comment type="catalytic activity">
    <reaction evidence="1">
        <text>citrate = D-threo-isocitrate</text>
        <dbReference type="Rhea" id="RHEA:10336"/>
        <dbReference type="ChEBI" id="CHEBI:15562"/>
        <dbReference type="ChEBI" id="CHEBI:16947"/>
        <dbReference type="EC" id="4.2.1.3"/>
    </reaction>
</comment>
<comment type="pathway">
    <text evidence="5">Organic acid metabolism; propanoate degradation.</text>
</comment>
<comment type="pathway">
    <text evidence="4">Carbohydrate metabolism; tricarboxylic acid cycle; isocitrate from oxaloacetate: step 2/2.</text>
</comment>
<comment type="subunit">
    <text evidence="1">Monomer.</text>
</comment>
<comment type="disruption phenotype">
    <text evidence="2">Cells lacking this gene are still able to use propionate as carbon source.</text>
</comment>
<comment type="similarity">
    <text evidence="4">Belongs to the PrpD family.</text>
</comment>
<feature type="chain" id="PRO_0000432933" description="2-methylcitrate dehydratase">
    <location>
        <begin position="1"/>
        <end position="484"/>
    </location>
</feature>
<sequence length="484" mass="53002">MSTDTPSAQRPDPDQVLVDIVDYVTRYEIKSGLAYDTARNCLIDTLGCGLEALSYPACTKLLGPVVPGTIVPNGARVPGTQFQLDPVQAAFNIGAMIRWLDFNDTWLAAEWGHPSDNLGGILATADWISRNHIAAGRKPLTMKAVLAAMIKAHEIQGCIALENSFNQVGLDHVVLVKVASTAVVAQMLGLTRDEILNAVSLAWVDGQSLRTYRHAPNAGSRKSWAHGDATSRAVRLALIARTGEMGYPSVLTAKTWGFYDVLFKGQPFRFQRPYGTYVMENILLKISYPAEFHAQTAVEAAMQLHGALALAGRSAADIAAITIRTHEACLRIIDKLGPLSNPADRDHCIQYMVAVPLLFGRLTAADYEDRIAADPRIDALRGRITCVEDPALTRDYHDPAKRSIANALTVTLADGTVLDEVLVEYPLGHKRRRAEGIPLLVEKFRTNLARRFPPKQQQAILAASLDQARLEAMPVNEYLDMYAI</sequence>
<proteinExistence type="inferred from homology"/>
<evidence type="ECO:0000250" key="1">
    <source>
        <dbReference type="UniProtKB" id="P77243"/>
    </source>
</evidence>
<evidence type="ECO:0000269" key="2">
    <source>
    </source>
</evidence>
<evidence type="ECO:0000303" key="3">
    <source>
    </source>
</evidence>
<evidence type="ECO:0000305" key="4"/>
<evidence type="ECO:0000305" key="5">
    <source>
    </source>
</evidence>
<organism>
    <name type="scientific">Cupriavidus necator</name>
    <name type="common">Alcaligenes eutrophus</name>
    <name type="synonym">Ralstonia eutropha</name>
    <dbReference type="NCBI Taxonomy" id="106590"/>
    <lineage>
        <taxon>Bacteria</taxon>
        <taxon>Pseudomonadati</taxon>
        <taxon>Pseudomonadota</taxon>
        <taxon>Betaproteobacteria</taxon>
        <taxon>Burkholderiales</taxon>
        <taxon>Burkholderiaceae</taxon>
        <taxon>Cupriavidus</taxon>
    </lineage>
</organism>
<name>PRPD_CUPNE</name>
<gene>
    <name type="primary">prpD</name>
</gene>
<protein>
    <recommendedName>
        <fullName evidence="3">2-methylcitrate dehydratase</fullName>
        <shortName evidence="3">2-MC dehydratase</shortName>
        <ecNumber evidence="1">4.2.1.79</ecNumber>
    </recommendedName>
    <alternativeName>
        <fullName evidence="1">Aconitate hydratase</fullName>
        <shortName evidence="1">ACN</shortName>
        <shortName evidence="1">Aconitase</shortName>
        <ecNumber evidence="1">4.2.1.3</ecNumber>
    </alternativeName>
</protein>
<keyword id="KW-0456">Lyase</keyword>
<keyword id="KW-0816">Tricarboxylic acid cycle</keyword>
<accession>Q937N6</accession>
<dbReference type="EC" id="4.2.1.79" evidence="1"/>
<dbReference type="EC" id="4.2.1.3" evidence="1"/>
<dbReference type="EMBL" id="AF325554">
    <property type="protein sequence ID" value="AAL03992.1"/>
    <property type="molecule type" value="Genomic_DNA"/>
</dbReference>
<dbReference type="SMR" id="Q937N6"/>
<dbReference type="UniPathway" id="UPA00223">
    <property type="reaction ID" value="UER00718"/>
</dbReference>
<dbReference type="UniPathway" id="UPA00946"/>
<dbReference type="GO" id="GO:0051537">
    <property type="term" value="F:2 iron, 2 sulfur cluster binding"/>
    <property type="evidence" value="ECO:0007669"/>
    <property type="project" value="InterPro"/>
</dbReference>
<dbReference type="GO" id="GO:0047547">
    <property type="term" value="F:2-methylcitrate dehydratase activity"/>
    <property type="evidence" value="ECO:0000314"/>
    <property type="project" value="UniProtKB"/>
</dbReference>
<dbReference type="GO" id="GO:0003994">
    <property type="term" value="F:aconitate hydratase activity"/>
    <property type="evidence" value="ECO:0007669"/>
    <property type="project" value="UniProtKB-EC"/>
</dbReference>
<dbReference type="GO" id="GO:0019679">
    <property type="term" value="P:propionate metabolic process, methylcitrate cycle"/>
    <property type="evidence" value="ECO:0000304"/>
    <property type="project" value="UniProtKB"/>
</dbReference>
<dbReference type="GO" id="GO:0006099">
    <property type="term" value="P:tricarboxylic acid cycle"/>
    <property type="evidence" value="ECO:0007669"/>
    <property type="project" value="UniProtKB-UniPathway"/>
</dbReference>
<dbReference type="FunFam" id="3.30.1330.120:FF:000001">
    <property type="entry name" value="2-methylcitrate dehydratase"/>
    <property type="match status" value="1"/>
</dbReference>
<dbReference type="Gene3D" id="1.10.4100.10">
    <property type="entry name" value="2-methylcitrate dehydratase PrpD"/>
    <property type="match status" value="1"/>
</dbReference>
<dbReference type="Gene3D" id="3.30.1330.120">
    <property type="entry name" value="2-methylcitrate dehydratase PrpD"/>
    <property type="match status" value="1"/>
</dbReference>
<dbReference type="InterPro" id="IPR012705">
    <property type="entry name" value="2Me_IsoCit_deHydtase_PrpD"/>
</dbReference>
<dbReference type="InterPro" id="IPR036148">
    <property type="entry name" value="MmgE/PrpD_sf"/>
</dbReference>
<dbReference type="InterPro" id="IPR042183">
    <property type="entry name" value="MmgE/PrpD_sf_1"/>
</dbReference>
<dbReference type="InterPro" id="IPR042188">
    <property type="entry name" value="MmgE/PrpD_sf_2"/>
</dbReference>
<dbReference type="InterPro" id="IPR005656">
    <property type="entry name" value="MmgE_PrpD"/>
</dbReference>
<dbReference type="InterPro" id="IPR045337">
    <property type="entry name" value="MmgE_PrpD_C"/>
</dbReference>
<dbReference type="InterPro" id="IPR045336">
    <property type="entry name" value="MmgE_PrpD_N"/>
</dbReference>
<dbReference type="NCBIfam" id="NF006943">
    <property type="entry name" value="PRK09425.1"/>
    <property type="match status" value="1"/>
</dbReference>
<dbReference type="NCBIfam" id="TIGR02330">
    <property type="entry name" value="prpD"/>
    <property type="match status" value="1"/>
</dbReference>
<dbReference type="PANTHER" id="PTHR16943:SF8">
    <property type="entry name" value="2-METHYLCITRATE DEHYDRATASE"/>
    <property type="match status" value="1"/>
</dbReference>
<dbReference type="PANTHER" id="PTHR16943">
    <property type="entry name" value="2-METHYLCITRATE DEHYDRATASE-RELATED"/>
    <property type="match status" value="1"/>
</dbReference>
<dbReference type="Pfam" id="PF19305">
    <property type="entry name" value="MmgE_PrpD_C"/>
    <property type="match status" value="1"/>
</dbReference>
<dbReference type="Pfam" id="PF03972">
    <property type="entry name" value="MmgE_PrpD_N"/>
    <property type="match status" value="1"/>
</dbReference>
<dbReference type="SUPFAM" id="SSF103378">
    <property type="entry name" value="2-methylcitrate dehydratase PrpD"/>
    <property type="match status" value="1"/>
</dbReference>